<proteinExistence type="inferred from homology"/>
<feature type="chain" id="PRO_1000213869" description="Carbamoyl phosphate synthase small chain">
    <location>
        <begin position="1"/>
        <end position="391"/>
    </location>
</feature>
<feature type="domain" description="Glutamine amidotransferase type-1" evidence="1">
    <location>
        <begin position="203"/>
        <end position="388"/>
    </location>
</feature>
<feature type="region of interest" description="CPSase" evidence="1">
    <location>
        <begin position="1"/>
        <end position="199"/>
    </location>
</feature>
<feature type="active site" description="Nucleophile" evidence="1">
    <location>
        <position position="279"/>
    </location>
</feature>
<feature type="active site" evidence="1">
    <location>
        <position position="361"/>
    </location>
</feature>
<feature type="active site" evidence="1">
    <location>
        <position position="363"/>
    </location>
</feature>
<feature type="binding site" evidence="1">
    <location>
        <position position="61"/>
    </location>
    <ligand>
        <name>L-glutamine</name>
        <dbReference type="ChEBI" id="CHEBI:58359"/>
    </ligand>
</feature>
<feature type="binding site" evidence="1">
    <location>
        <position position="251"/>
    </location>
    <ligand>
        <name>L-glutamine</name>
        <dbReference type="ChEBI" id="CHEBI:58359"/>
    </ligand>
</feature>
<feature type="binding site" evidence="1">
    <location>
        <position position="253"/>
    </location>
    <ligand>
        <name>L-glutamine</name>
        <dbReference type="ChEBI" id="CHEBI:58359"/>
    </ligand>
</feature>
<feature type="binding site" evidence="1">
    <location>
        <position position="280"/>
    </location>
    <ligand>
        <name>L-glutamine</name>
        <dbReference type="ChEBI" id="CHEBI:58359"/>
    </ligand>
</feature>
<feature type="binding site" evidence="1">
    <location>
        <position position="283"/>
    </location>
    <ligand>
        <name>L-glutamine</name>
        <dbReference type="ChEBI" id="CHEBI:58359"/>
    </ligand>
</feature>
<feature type="binding site" evidence="1">
    <location>
        <position position="319"/>
    </location>
    <ligand>
        <name>L-glutamine</name>
        <dbReference type="ChEBI" id="CHEBI:58359"/>
    </ligand>
</feature>
<feature type="binding site" evidence="1">
    <location>
        <position position="321"/>
    </location>
    <ligand>
        <name>L-glutamine</name>
        <dbReference type="ChEBI" id="CHEBI:58359"/>
    </ligand>
</feature>
<feature type="binding site" evidence="1">
    <location>
        <position position="322"/>
    </location>
    <ligand>
        <name>L-glutamine</name>
        <dbReference type="ChEBI" id="CHEBI:58359"/>
    </ligand>
</feature>
<gene>
    <name evidence="1" type="primary">carA</name>
    <name type="ordered locus">syc1970_d</name>
</gene>
<keyword id="KW-0028">Amino-acid biosynthesis</keyword>
<keyword id="KW-0055">Arginine biosynthesis</keyword>
<keyword id="KW-0067">ATP-binding</keyword>
<keyword id="KW-0315">Glutamine amidotransferase</keyword>
<keyword id="KW-0436">Ligase</keyword>
<keyword id="KW-0547">Nucleotide-binding</keyword>
<keyword id="KW-0665">Pyrimidine biosynthesis</keyword>
<name>CARA_SYNP6</name>
<accession>Q5N0L0</accession>
<dbReference type="EC" id="6.3.5.5" evidence="1"/>
<dbReference type="EMBL" id="AP008231">
    <property type="protein sequence ID" value="BAD80160.1"/>
    <property type="molecule type" value="Genomic_DNA"/>
</dbReference>
<dbReference type="RefSeq" id="WP_011244280.1">
    <property type="nucleotide sequence ID" value="NC_006576.1"/>
</dbReference>
<dbReference type="SMR" id="Q5N0L0"/>
<dbReference type="MEROPS" id="C26.A04"/>
<dbReference type="KEGG" id="syc:syc1970_d"/>
<dbReference type="eggNOG" id="COG0505">
    <property type="taxonomic scope" value="Bacteria"/>
</dbReference>
<dbReference type="UniPathway" id="UPA00068">
    <property type="reaction ID" value="UER00171"/>
</dbReference>
<dbReference type="UniPathway" id="UPA00070">
    <property type="reaction ID" value="UER00115"/>
</dbReference>
<dbReference type="Proteomes" id="UP000001175">
    <property type="component" value="Chromosome"/>
</dbReference>
<dbReference type="GO" id="GO:0005524">
    <property type="term" value="F:ATP binding"/>
    <property type="evidence" value="ECO:0007669"/>
    <property type="project" value="UniProtKB-UniRule"/>
</dbReference>
<dbReference type="GO" id="GO:0004088">
    <property type="term" value="F:carbamoyl-phosphate synthase (glutamine-hydrolyzing) activity"/>
    <property type="evidence" value="ECO:0007669"/>
    <property type="project" value="UniProtKB-UniRule"/>
</dbReference>
<dbReference type="GO" id="GO:0004359">
    <property type="term" value="F:glutaminase activity"/>
    <property type="evidence" value="ECO:0007669"/>
    <property type="project" value="RHEA"/>
</dbReference>
<dbReference type="GO" id="GO:0006207">
    <property type="term" value="P:'de novo' pyrimidine nucleobase biosynthetic process"/>
    <property type="evidence" value="ECO:0007669"/>
    <property type="project" value="InterPro"/>
</dbReference>
<dbReference type="GO" id="GO:0044205">
    <property type="term" value="P:'de novo' UMP biosynthetic process"/>
    <property type="evidence" value="ECO:0007669"/>
    <property type="project" value="UniProtKB-UniRule"/>
</dbReference>
<dbReference type="GO" id="GO:0006541">
    <property type="term" value="P:glutamine metabolic process"/>
    <property type="evidence" value="ECO:0007669"/>
    <property type="project" value="InterPro"/>
</dbReference>
<dbReference type="GO" id="GO:0006526">
    <property type="term" value="P:L-arginine biosynthetic process"/>
    <property type="evidence" value="ECO:0007669"/>
    <property type="project" value="UniProtKB-UniRule"/>
</dbReference>
<dbReference type="CDD" id="cd01744">
    <property type="entry name" value="GATase1_CPSase"/>
    <property type="match status" value="1"/>
</dbReference>
<dbReference type="FunFam" id="3.50.30.20:FF:000001">
    <property type="entry name" value="Carbamoyl-phosphate synthase small chain"/>
    <property type="match status" value="1"/>
</dbReference>
<dbReference type="Gene3D" id="3.40.50.880">
    <property type="match status" value="1"/>
</dbReference>
<dbReference type="Gene3D" id="3.50.30.20">
    <property type="entry name" value="Carbamoyl-phosphate synthase small subunit, N-terminal domain"/>
    <property type="match status" value="1"/>
</dbReference>
<dbReference type="HAMAP" id="MF_01209">
    <property type="entry name" value="CPSase_S_chain"/>
    <property type="match status" value="1"/>
</dbReference>
<dbReference type="InterPro" id="IPR050472">
    <property type="entry name" value="Anth_synth/Amidotransfase"/>
</dbReference>
<dbReference type="InterPro" id="IPR006274">
    <property type="entry name" value="CarbamoylP_synth_ssu"/>
</dbReference>
<dbReference type="InterPro" id="IPR002474">
    <property type="entry name" value="CarbamoylP_synth_ssu_N"/>
</dbReference>
<dbReference type="InterPro" id="IPR036480">
    <property type="entry name" value="CarbP_synth_ssu_N_sf"/>
</dbReference>
<dbReference type="InterPro" id="IPR029062">
    <property type="entry name" value="Class_I_gatase-like"/>
</dbReference>
<dbReference type="InterPro" id="IPR035686">
    <property type="entry name" value="CPSase_GATase1"/>
</dbReference>
<dbReference type="InterPro" id="IPR017926">
    <property type="entry name" value="GATASE"/>
</dbReference>
<dbReference type="NCBIfam" id="TIGR01368">
    <property type="entry name" value="CPSaseIIsmall"/>
    <property type="match status" value="1"/>
</dbReference>
<dbReference type="NCBIfam" id="NF009475">
    <property type="entry name" value="PRK12838.1"/>
    <property type="match status" value="1"/>
</dbReference>
<dbReference type="PANTHER" id="PTHR43418:SF7">
    <property type="entry name" value="CARBAMOYL-PHOSPHATE SYNTHASE SMALL CHAIN"/>
    <property type="match status" value="1"/>
</dbReference>
<dbReference type="PANTHER" id="PTHR43418">
    <property type="entry name" value="MULTIFUNCTIONAL TRYPTOPHAN BIOSYNTHESIS PROTEIN-RELATED"/>
    <property type="match status" value="1"/>
</dbReference>
<dbReference type="Pfam" id="PF00988">
    <property type="entry name" value="CPSase_sm_chain"/>
    <property type="match status" value="1"/>
</dbReference>
<dbReference type="Pfam" id="PF00117">
    <property type="entry name" value="GATase"/>
    <property type="match status" value="1"/>
</dbReference>
<dbReference type="PRINTS" id="PR00097">
    <property type="entry name" value="ANTSNTHASEII"/>
</dbReference>
<dbReference type="PRINTS" id="PR00099">
    <property type="entry name" value="CPSGATASE"/>
</dbReference>
<dbReference type="PRINTS" id="PR00096">
    <property type="entry name" value="GATASE"/>
</dbReference>
<dbReference type="SMART" id="SM01097">
    <property type="entry name" value="CPSase_sm_chain"/>
    <property type="match status" value="1"/>
</dbReference>
<dbReference type="SUPFAM" id="SSF52021">
    <property type="entry name" value="Carbamoyl phosphate synthetase, small subunit N-terminal domain"/>
    <property type="match status" value="1"/>
</dbReference>
<dbReference type="SUPFAM" id="SSF52317">
    <property type="entry name" value="Class I glutamine amidotransferase-like"/>
    <property type="match status" value="1"/>
</dbReference>
<dbReference type="PROSITE" id="PS51273">
    <property type="entry name" value="GATASE_TYPE_1"/>
    <property type="match status" value="1"/>
</dbReference>
<reference key="1">
    <citation type="journal article" date="2007" name="Photosyn. Res.">
        <title>Complete nucleotide sequence of the freshwater unicellular cyanobacterium Synechococcus elongatus PCC 6301 chromosome: gene content and organization.</title>
        <authorList>
            <person name="Sugita C."/>
            <person name="Ogata K."/>
            <person name="Shikata M."/>
            <person name="Jikuya H."/>
            <person name="Takano J."/>
            <person name="Furumichi M."/>
            <person name="Kanehisa M."/>
            <person name="Omata T."/>
            <person name="Sugiura M."/>
            <person name="Sugita M."/>
        </authorList>
    </citation>
    <scope>NUCLEOTIDE SEQUENCE [LARGE SCALE GENOMIC DNA]</scope>
    <source>
        <strain>ATCC 27144 / PCC 6301 / SAUG 1402/1</strain>
    </source>
</reference>
<protein>
    <recommendedName>
        <fullName evidence="1">Carbamoyl phosphate synthase small chain</fullName>
        <ecNumber evidence="1">6.3.5.5</ecNumber>
    </recommendedName>
    <alternativeName>
        <fullName evidence="1">Carbamoyl phosphate synthetase glutamine chain</fullName>
    </alternativeName>
</protein>
<organism>
    <name type="scientific">Synechococcus sp. (strain ATCC 27144 / PCC 6301 / SAUG 1402/1)</name>
    <name type="common">Anacystis nidulans</name>
    <dbReference type="NCBI Taxonomy" id="269084"/>
    <lineage>
        <taxon>Bacteria</taxon>
        <taxon>Bacillati</taxon>
        <taxon>Cyanobacteriota</taxon>
        <taxon>Cyanophyceae</taxon>
        <taxon>Synechococcales</taxon>
        <taxon>Synechococcaceae</taxon>
        <taxon>Synechococcus</taxon>
    </lineage>
</organism>
<sequence length="391" mass="42393">MVRISGFCCAMSLAERQAALLVLADGSVFHGYACGAAGTVIGEVVFNTGMTGYQEVLTDPSYCGQIVSFTYPELGNTGVNPEDEESARPQVSGLIARNVARRHSNWRADRSLPDYLQQHNIVGIYGIDTRALTQHLRSTGAMNGGISTTILDPEELWAEVKAAPSMEGLNLVDQVTTDRPYEWQTPTSQTWEFIEGPTTESLTVVAIDFGVKRNILRRLASYGCRVIVVPADTPIEEILRHEPDGVFLSNGPGDPATVKNGISTAQALLQTGLPLFGICLGHQILGSALGAQTFKLKFGHRGLNHPCGLSQQVEITGQNHGFAIAADSLGPDVEVTHLNLNDRTVAGLRHRHLPVFSVQYHPEASPGPHDSDYLFEQFVALMRDRQPTPVA</sequence>
<comment type="function">
    <text evidence="1">Small subunit of the glutamine-dependent carbamoyl phosphate synthetase (CPSase). CPSase catalyzes the formation of carbamoyl phosphate from the ammonia moiety of glutamine, carbonate, and phosphate donated by ATP, constituting the first step of 2 biosynthetic pathways, one leading to arginine and/or urea and the other to pyrimidine nucleotides. The small subunit (glutamine amidotransferase) binds and cleaves glutamine to supply the large subunit with the substrate ammonia.</text>
</comment>
<comment type="catalytic activity">
    <reaction evidence="1">
        <text>hydrogencarbonate + L-glutamine + 2 ATP + H2O = carbamoyl phosphate + L-glutamate + 2 ADP + phosphate + 2 H(+)</text>
        <dbReference type="Rhea" id="RHEA:18633"/>
        <dbReference type="ChEBI" id="CHEBI:15377"/>
        <dbReference type="ChEBI" id="CHEBI:15378"/>
        <dbReference type="ChEBI" id="CHEBI:17544"/>
        <dbReference type="ChEBI" id="CHEBI:29985"/>
        <dbReference type="ChEBI" id="CHEBI:30616"/>
        <dbReference type="ChEBI" id="CHEBI:43474"/>
        <dbReference type="ChEBI" id="CHEBI:58228"/>
        <dbReference type="ChEBI" id="CHEBI:58359"/>
        <dbReference type="ChEBI" id="CHEBI:456216"/>
        <dbReference type="EC" id="6.3.5.5"/>
    </reaction>
</comment>
<comment type="catalytic activity">
    <molecule>Carbamoyl phosphate synthase small chain</molecule>
    <reaction evidence="1">
        <text>L-glutamine + H2O = L-glutamate + NH4(+)</text>
        <dbReference type="Rhea" id="RHEA:15889"/>
        <dbReference type="ChEBI" id="CHEBI:15377"/>
        <dbReference type="ChEBI" id="CHEBI:28938"/>
        <dbReference type="ChEBI" id="CHEBI:29985"/>
        <dbReference type="ChEBI" id="CHEBI:58359"/>
    </reaction>
</comment>
<comment type="pathway">
    <text evidence="1">Amino-acid biosynthesis; L-arginine biosynthesis; carbamoyl phosphate from bicarbonate: step 1/1.</text>
</comment>
<comment type="pathway">
    <text evidence="1">Pyrimidine metabolism; UMP biosynthesis via de novo pathway; (S)-dihydroorotate from bicarbonate: step 1/3.</text>
</comment>
<comment type="subunit">
    <text evidence="1">Composed of two chains; the small (or glutamine) chain promotes the hydrolysis of glutamine to ammonia, which is used by the large (or ammonia) chain to synthesize carbamoyl phosphate. Tetramer of heterodimers (alpha,beta)4.</text>
</comment>
<comment type="similarity">
    <text evidence="1">Belongs to the CarA family.</text>
</comment>
<evidence type="ECO:0000255" key="1">
    <source>
        <dbReference type="HAMAP-Rule" id="MF_01209"/>
    </source>
</evidence>